<reference key="1">
    <citation type="journal article" date="2005" name="J. Bacteriol.">
        <title>Whole-genome sequence analysis of Pseudomonas syringae pv. phaseolicola 1448A reveals divergence among pathovars in genes involved in virulence and transposition.</title>
        <authorList>
            <person name="Joardar V."/>
            <person name="Lindeberg M."/>
            <person name="Jackson R.W."/>
            <person name="Selengut J."/>
            <person name="Dodson R."/>
            <person name="Brinkac L.M."/>
            <person name="Daugherty S.C."/>
            <person name="DeBoy R.T."/>
            <person name="Durkin A.S."/>
            <person name="Gwinn Giglio M."/>
            <person name="Madupu R."/>
            <person name="Nelson W.C."/>
            <person name="Rosovitz M.J."/>
            <person name="Sullivan S.A."/>
            <person name="Crabtree J."/>
            <person name="Creasy T."/>
            <person name="Davidsen T.M."/>
            <person name="Haft D.H."/>
            <person name="Zafar N."/>
            <person name="Zhou L."/>
            <person name="Halpin R."/>
            <person name="Holley T."/>
            <person name="Khouri H.M."/>
            <person name="Feldblyum T.V."/>
            <person name="White O."/>
            <person name="Fraser C.M."/>
            <person name="Chatterjee A.K."/>
            <person name="Cartinhour S."/>
            <person name="Schneider D."/>
            <person name="Mansfield J.W."/>
            <person name="Collmer A."/>
            <person name="Buell R."/>
        </authorList>
    </citation>
    <scope>NUCLEOTIDE SEQUENCE [LARGE SCALE GENOMIC DNA]</scope>
    <source>
        <strain>1448A / Race 6</strain>
    </source>
</reference>
<gene>
    <name evidence="1" type="primary">lgt</name>
    <name type="ordered locus">PSPPH_4873</name>
</gene>
<name>LGT_PSE14</name>
<evidence type="ECO:0000255" key="1">
    <source>
        <dbReference type="HAMAP-Rule" id="MF_01147"/>
    </source>
</evidence>
<organism>
    <name type="scientific">Pseudomonas savastanoi pv. phaseolicola (strain 1448A / Race 6)</name>
    <name type="common">Pseudomonas syringae pv. phaseolicola (strain 1448A / Race 6)</name>
    <dbReference type="NCBI Taxonomy" id="264730"/>
    <lineage>
        <taxon>Bacteria</taxon>
        <taxon>Pseudomonadati</taxon>
        <taxon>Pseudomonadota</taxon>
        <taxon>Gammaproteobacteria</taxon>
        <taxon>Pseudomonadales</taxon>
        <taxon>Pseudomonadaceae</taxon>
        <taxon>Pseudomonas</taxon>
    </lineage>
</organism>
<feature type="chain" id="PRO_1000053473" description="Phosphatidylglycerol--prolipoprotein diacylglyceryl transferase">
    <location>
        <begin position="1"/>
        <end position="270"/>
    </location>
</feature>
<feature type="transmembrane region" description="Helical" evidence="1">
    <location>
        <begin position="10"/>
        <end position="30"/>
    </location>
</feature>
<feature type="transmembrane region" description="Helical" evidence="1">
    <location>
        <begin position="56"/>
        <end position="76"/>
    </location>
</feature>
<feature type="transmembrane region" description="Helical" evidence="1">
    <location>
        <begin position="92"/>
        <end position="112"/>
    </location>
</feature>
<feature type="transmembrane region" description="Helical" evidence="1">
    <location>
        <begin position="120"/>
        <end position="140"/>
    </location>
</feature>
<feature type="transmembrane region" description="Helical" evidence="1">
    <location>
        <begin position="175"/>
        <end position="195"/>
    </location>
</feature>
<feature type="transmembrane region" description="Helical" evidence="1">
    <location>
        <begin position="202"/>
        <end position="222"/>
    </location>
</feature>
<feature type="transmembrane region" description="Helical" evidence="1">
    <location>
        <begin position="237"/>
        <end position="257"/>
    </location>
</feature>
<feature type="binding site" evidence="1">
    <location>
        <position position="139"/>
    </location>
    <ligand>
        <name>a 1,2-diacyl-sn-glycero-3-phospho-(1'-sn-glycerol)</name>
        <dbReference type="ChEBI" id="CHEBI:64716"/>
    </ligand>
</feature>
<proteinExistence type="inferred from homology"/>
<sequence length="270" mass="30115">MLPYPQIDPVAVAIGPLQIHWYGLMYLVGIGGAWLLASRRLNKFDPTWTKEKLSDLIFWLAMGVIVGGRLGYVLFYDLSAYIANPLLIFEVWKGGMAFHGGFVGVMIAAWWFGKRNGKSFFQLMDFVAPLVPIGLGAGRIGNFINAELWGKPTDVPWAMVFPPFSDPAQLARHPSQLYQFALEGVALFIILNLYARKPRPTMAVSGMFALFYGIFRFVVEFVRVPDAQLGYLAWGWVTMGQILSLPMIIAGLFLIWLAYKRDPAASKAAA</sequence>
<accession>Q48CC8</accession>
<dbReference type="EC" id="2.5.1.145" evidence="1"/>
<dbReference type="EMBL" id="CP000058">
    <property type="protein sequence ID" value="AAZ35179.1"/>
    <property type="molecule type" value="Genomic_DNA"/>
</dbReference>
<dbReference type="RefSeq" id="WP_004655000.1">
    <property type="nucleotide sequence ID" value="NC_005773.3"/>
</dbReference>
<dbReference type="SMR" id="Q48CC8"/>
<dbReference type="GeneID" id="61872409"/>
<dbReference type="KEGG" id="psp:PSPPH_4873"/>
<dbReference type="eggNOG" id="COG0682">
    <property type="taxonomic scope" value="Bacteria"/>
</dbReference>
<dbReference type="HOGENOM" id="CLU_013386_1_0_6"/>
<dbReference type="UniPathway" id="UPA00664"/>
<dbReference type="Proteomes" id="UP000000551">
    <property type="component" value="Chromosome"/>
</dbReference>
<dbReference type="GO" id="GO:0005886">
    <property type="term" value="C:plasma membrane"/>
    <property type="evidence" value="ECO:0007669"/>
    <property type="project" value="UniProtKB-SubCell"/>
</dbReference>
<dbReference type="GO" id="GO:0008961">
    <property type="term" value="F:phosphatidylglycerol-prolipoprotein diacylglyceryl transferase activity"/>
    <property type="evidence" value="ECO:0007669"/>
    <property type="project" value="UniProtKB-UniRule"/>
</dbReference>
<dbReference type="GO" id="GO:0042158">
    <property type="term" value="P:lipoprotein biosynthetic process"/>
    <property type="evidence" value="ECO:0007669"/>
    <property type="project" value="UniProtKB-UniRule"/>
</dbReference>
<dbReference type="HAMAP" id="MF_01147">
    <property type="entry name" value="Lgt"/>
    <property type="match status" value="1"/>
</dbReference>
<dbReference type="InterPro" id="IPR001640">
    <property type="entry name" value="Lgt"/>
</dbReference>
<dbReference type="NCBIfam" id="TIGR00544">
    <property type="entry name" value="lgt"/>
    <property type="match status" value="1"/>
</dbReference>
<dbReference type="PANTHER" id="PTHR30589:SF0">
    <property type="entry name" value="PHOSPHATIDYLGLYCEROL--PROLIPOPROTEIN DIACYLGLYCERYL TRANSFERASE"/>
    <property type="match status" value="1"/>
</dbReference>
<dbReference type="PANTHER" id="PTHR30589">
    <property type="entry name" value="PROLIPOPROTEIN DIACYLGLYCERYL TRANSFERASE"/>
    <property type="match status" value="1"/>
</dbReference>
<dbReference type="Pfam" id="PF01790">
    <property type="entry name" value="LGT"/>
    <property type="match status" value="1"/>
</dbReference>
<dbReference type="PROSITE" id="PS01311">
    <property type="entry name" value="LGT"/>
    <property type="match status" value="1"/>
</dbReference>
<comment type="function">
    <text evidence="1">Catalyzes the transfer of the diacylglyceryl group from phosphatidylglycerol to the sulfhydryl group of the N-terminal cysteine of a prolipoprotein, the first step in the formation of mature lipoproteins.</text>
</comment>
<comment type="catalytic activity">
    <reaction evidence="1">
        <text>L-cysteinyl-[prolipoprotein] + a 1,2-diacyl-sn-glycero-3-phospho-(1'-sn-glycerol) = an S-1,2-diacyl-sn-glyceryl-L-cysteinyl-[prolipoprotein] + sn-glycerol 1-phosphate + H(+)</text>
        <dbReference type="Rhea" id="RHEA:56712"/>
        <dbReference type="Rhea" id="RHEA-COMP:14679"/>
        <dbReference type="Rhea" id="RHEA-COMP:14680"/>
        <dbReference type="ChEBI" id="CHEBI:15378"/>
        <dbReference type="ChEBI" id="CHEBI:29950"/>
        <dbReference type="ChEBI" id="CHEBI:57685"/>
        <dbReference type="ChEBI" id="CHEBI:64716"/>
        <dbReference type="ChEBI" id="CHEBI:140658"/>
        <dbReference type="EC" id="2.5.1.145"/>
    </reaction>
</comment>
<comment type="pathway">
    <text evidence="1">Protein modification; lipoprotein biosynthesis (diacylglyceryl transfer).</text>
</comment>
<comment type="subcellular location">
    <subcellularLocation>
        <location evidence="1">Cell inner membrane</location>
        <topology evidence="1">Multi-pass membrane protein</topology>
    </subcellularLocation>
</comment>
<comment type="similarity">
    <text evidence="1">Belongs to the Lgt family.</text>
</comment>
<keyword id="KW-0997">Cell inner membrane</keyword>
<keyword id="KW-1003">Cell membrane</keyword>
<keyword id="KW-0472">Membrane</keyword>
<keyword id="KW-0808">Transferase</keyword>
<keyword id="KW-0812">Transmembrane</keyword>
<keyword id="KW-1133">Transmembrane helix</keyword>
<protein>
    <recommendedName>
        <fullName evidence="1">Phosphatidylglycerol--prolipoprotein diacylglyceryl transferase</fullName>
        <ecNumber evidence="1">2.5.1.145</ecNumber>
    </recommendedName>
</protein>